<dbReference type="EMBL" id="AL513382">
    <property type="protein sequence ID" value="CAD09409.1"/>
    <property type="molecule type" value="Genomic_DNA"/>
</dbReference>
<dbReference type="EMBL" id="AE014613">
    <property type="protein sequence ID" value="AAO70914.1"/>
    <property type="molecule type" value="Genomic_DNA"/>
</dbReference>
<dbReference type="RefSeq" id="NP_457840.1">
    <property type="nucleotide sequence ID" value="NC_003198.1"/>
</dbReference>
<dbReference type="RefSeq" id="WP_000365798.1">
    <property type="nucleotide sequence ID" value="NZ_WSUR01000032.1"/>
</dbReference>
<dbReference type="SMR" id="P0A2Q3"/>
<dbReference type="STRING" id="220341.gene:17587504"/>
<dbReference type="KEGG" id="stt:t3390"/>
<dbReference type="KEGG" id="sty:STY3649"/>
<dbReference type="PATRIC" id="fig|220341.7.peg.3718"/>
<dbReference type="eggNOG" id="COG0583">
    <property type="taxonomic scope" value="Bacteria"/>
</dbReference>
<dbReference type="HOGENOM" id="CLU_039613_6_1_6"/>
<dbReference type="OMA" id="FERDNRS"/>
<dbReference type="OrthoDB" id="9803735at2"/>
<dbReference type="Proteomes" id="UP000000541">
    <property type="component" value="Chromosome"/>
</dbReference>
<dbReference type="Proteomes" id="UP000002670">
    <property type="component" value="Chromosome"/>
</dbReference>
<dbReference type="GO" id="GO:0005737">
    <property type="term" value="C:cytoplasm"/>
    <property type="evidence" value="ECO:0007669"/>
    <property type="project" value="UniProtKB-SubCell"/>
</dbReference>
<dbReference type="GO" id="GO:0003700">
    <property type="term" value="F:DNA-binding transcription factor activity"/>
    <property type="evidence" value="ECO:0007669"/>
    <property type="project" value="InterPro"/>
</dbReference>
<dbReference type="GO" id="GO:0000976">
    <property type="term" value="F:transcription cis-regulatory region binding"/>
    <property type="evidence" value="ECO:0007669"/>
    <property type="project" value="TreeGrafter"/>
</dbReference>
<dbReference type="GO" id="GO:0008652">
    <property type="term" value="P:amino acid biosynthetic process"/>
    <property type="evidence" value="ECO:0007669"/>
    <property type="project" value="UniProtKB-KW"/>
</dbReference>
<dbReference type="GO" id="GO:0009082">
    <property type="term" value="P:branched-chain amino acid biosynthetic process"/>
    <property type="evidence" value="ECO:0007669"/>
    <property type="project" value="UniProtKB-KW"/>
</dbReference>
<dbReference type="CDD" id="cd08430">
    <property type="entry name" value="PBP2_IlvY"/>
    <property type="match status" value="1"/>
</dbReference>
<dbReference type="FunFam" id="1.10.10.10:FF:000001">
    <property type="entry name" value="LysR family transcriptional regulator"/>
    <property type="match status" value="1"/>
</dbReference>
<dbReference type="Gene3D" id="3.40.190.10">
    <property type="entry name" value="Periplasmic binding protein-like II"/>
    <property type="match status" value="2"/>
</dbReference>
<dbReference type="Gene3D" id="1.10.10.10">
    <property type="entry name" value="Winged helix-like DNA-binding domain superfamily/Winged helix DNA-binding domain"/>
    <property type="match status" value="1"/>
</dbReference>
<dbReference type="InterPro" id="IPR037404">
    <property type="entry name" value="IlvY_PBP2"/>
</dbReference>
<dbReference type="InterPro" id="IPR005119">
    <property type="entry name" value="LysR_subst-bd"/>
</dbReference>
<dbReference type="InterPro" id="IPR000847">
    <property type="entry name" value="Tscrpt_reg_HTH_LysR"/>
</dbReference>
<dbReference type="InterPro" id="IPR036388">
    <property type="entry name" value="WH-like_DNA-bd_sf"/>
</dbReference>
<dbReference type="InterPro" id="IPR036390">
    <property type="entry name" value="WH_DNA-bd_sf"/>
</dbReference>
<dbReference type="NCBIfam" id="NF008722">
    <property type="entry name" value="PRK11716.1"/>
    <property type="match status" value="1"/>
</dbReference>
<dbReference type="PANTHER" id="PTHR30126">
    <property type="entry name" value="HTH-TYPE TRANSCRIPTIONAL REGULATOR"/>
    <property type="match status" value="1"/>
</dbReference>
<dbReference type="PANTHER" id="PTHR30126:SF81">
    <property type="entry name" value="HTH-TYPE TRANSCRIPTIONAL REGULATOR ILVY"/>
    <property type="match status" value="1"/>
</dbReference>
<dbReference type="Pfam" id="PF00126">
    <property type="entry name" value="HTH_1"/>
    <property type="match status" value="1"/>
</dbReference>
<dbReference type="Pfam" id="PF03466">
    <property type="entry name" value="LysR_substrate"/>
    <property type="match status" value="1"/>
</dbReference>
<dbReference type="PRINTS" id="PR00039">
    <property type="entry name" value="HTHLYSR"/>
</dbReference>
<dbReference type="SUPFAM" id="SSF53850">
    <property type="entry name" value="Periplasmic binding protein-like II"/>
    <property type="match status" value="1"/>
</dbReference>
<dbReference type="SUPFAM" id="SSF46785">
    <property type="entry name" value="Winged helix' DNA-binding domain"/>
    <property type="match status" value="1"/>
</dbReference>
<dbReference type="PROSITE" id="PS50931">
    <property type="entry name" value="HTH_LYSR"/>
    <property type="match status" value="1"/>
</dbReference>
<evidence type="ECO:0000250" key="1"/>
<evidence type="ECO:0000255" key="2">
    <source>
        <dbReference type="PROSITE-ProRule" id="PRU00253"/>
    </source>
</evidence>
<evidence type="ECO:0000305" key="3"/>
<name>ILVY_SALTI</name>
<organism>
    <name type="scientific">Salmonella typhi</name>
    <dbReference type="NCBI Taxonomy" id="90370"/>
    <lineage>
        <taxon>Bacteria</taxon>
        <taxon>Pseudomonadati</taxon>
        <taxon>Pseudomonadota</taxon>
        <taxon>Gammaproteobacteria</taxon>
        <taxon>Enterobacterales</taxon>
        <taxon>Enterobacteriaceae</taxon>
        <taxon>Salmonella</taxon>
    </lineage>
</organism>
<keyword id="KW-0010">Activator</keyword>
<keyword id="KW-0028">Amino-acid biosynthesis</keyword>
<keyword id="KW-0100">Branched-chain amino acid biosynthesis</keyword>
<keyword id="KW-0963">Cytoplasm</keyword>
<keyword id="KW-0238">DNA-binding</keyword>
<keyword id="KW-0678">Repressor</keyword>
<keyword id="KW-0804">Transcription</keyword>
<keyword id="KW-0805">Transcription regulation</keyword>
<proteinExistence type="inferred from homology"/>
<gene>
    <name type="primary">ilvY</name>
    <name type="ordered locus">STY3649</name>
    <name type="ordered locus">t3390</name>
</gene>
<comment type="function">
    <text evidence="1">This protein activates the transcription of the IlvC gene in the presence of acetolactate or acetohydroxybutyrate. IlvY is also a negative regulator of its own expression (By similarity).</text>
</comment>
<comment type="subcellular location">
    <subcellularLocation>
        <location evidence="1">Cytoplasm</location>
    </subcellularLocation>
</comment>
<comment type="similarity">
    <text evidence="3">Belongs to the LysR transcriptional regulatory family.</text>
</comment>
<sequence>MDLRDLKTFLHLAESRHFGRSARAMHVSPSTLSRQIQRLEEDLGQPLFVRDNRTVTLTEAGEELRVFAQQTLLQYQQLRHTLDQQGPSLSGELHIFCSVTAAYSHLPPILDRFRAEHPSVEIKLTTGDAADAMEKVVTGEADLAIAGKPETLPGAVAFSMLENLAVVLIAPALPCPVRNQVSVDKPDWSTVPFIMADQGPVRRRIELWFRRHKISNPQIYATVGGHEAMVSMVALGCGVALLPEVVLENSPEPVRNRVMILERSDEKTPFELGVCAQKKRLHEPLIDAFWKILPN</sequence>
<protein>
    <recommendedName>
        <fullName>HTH-type transcriptional activator IlvY</fullName>
    </recommendedName>
</protein>
<accession>P0A2Q3</accession>
<accession>P05988</accession>
<accession>Q9L6S5</accession>
<reference key="1">
    <citation type="journal article" date="2001" name="Nature">
        <title>Complete genome sequence of a multiple drug resistant Salmonella enterica serovar Typhi CT18.</title>
        <authorList>
            <person name="Parkhill J."/>
            <person name="Dougan G."/>
            <person name="James K.D."/>
            <person name="Thomson N.R."/>
            <person name="Pickard D."/>
            <person name="Wain J."/>
            <person name="Churcher C.M."/>
            <person name="Mungall K.L."/>
            <person name="Bentley S.D."/>
            <person name="Holden M.T.G."/>
            <person name="Sebaihia M."/>
            <person name="Baker S."/>
            <person name="Basham D."/>
            <person name="Brooks K."/>
            <person name="Chillingworth T."/>
            <person name="Connerton P."/>
            <person name="Cronin A."/>
            <person name="Davis P."/>
            <person name="Davies R.M."/>
            <person name="Dowd L."/>
            <person name="White N."/>
            <person name="Farrar J."/>
            <person name="Feltwell T."/>
            <person name="Hamlin N."/>
            <person name="Haque A."/>
            <person name="Hien T.T."/>
            <person name="Holroyd S."/>
            <person name="Jagels K."/>
            <person name="Krogh A."/>
            <person name="Larsen T.S."/>
            <person name="Leather S."/>
            <person name="Moule S."/>
            <person name="O'Gaora P."/>
            <person name="Parry C."/>
            <person name="Quail M.A."/>
            <person name="Rutherford K.M."/>
            <person name="Simmonds M."/>
            <person name="Skelton J."/>
            <person name="Stevens K."/>
            <person name="Whitehead S."/>
            <person name="Barrell B.G."/>
        </authorList>
    </citation>
    <scope>NUCLEOTIDE SEQUENCE [LARGE SCALE GENOMIC DNA]</scope>
    <source>
        <strain>CT18</strain>
    </source>
</reference>
<reference key="2">
    <citation type="journal article" date="2003" name="J. Bacteriol.">
        <title>Comparative genomics of Salmonella enterica serovar Typhi strains Ty2 and CT18.</title>
        <authorList>
            <person name="Deng W."/>
            <person name="Liou S.-R."/>
            <person name="Plunkett G. III"/>
            <person name="Mayhew G.F."/>
            <person name="Rose D.J."/>
            <person name="Burland V."/>
            <person name="Kodoyianni V."/>
            <person name="Schwartz D.C."/>
            <person name="Blattner F.R."/>
        </authorList>
    </citation>
    <scope>NUCLEOTIDE SEQUENCE [LARGE SCALE GENOMIC DNA]</scope>
    <source>
        <strain>ATCC 700931 / Ty2</strain>
    </source>
</reference>
<feature type="chain" id="PRO_0000105656" description="HTH-type transcriptional activator IlvY">
    <location>
        <begin position="1"/>
        <end position="295"/>
    </location>
</feature>
<feature type="domain" description="HTH lysR-type" evidence="2">
    <location>
        <begin position="1"/>
        <end position="58"/>
    </location>
</feature>
<feature type="DNA-binding region" description="H-T-H motif" evidence="2">
    <location>
        <begin position="18"/>
        <end position="37"/>
    </location>
</feature>